<comment type="function">
    <text evidence="1">Catalyzes the phosphorylation of the hydroxyl group of 4-methyl-5-beta-hydroxyethylthiazole (THZ).</text>
</comment>
<comment type="catalytic activity">
    <reaction evidence="1">
        <text>5-(2-hydroxyethyl)-4-methylthiazole + ATP = 4-methyl-5-(2-phosphooxyethyl)-thiazole + ADP + H(+)</text>
        <dbReference type="Rhea" id="RHEA:24212"/>
        <dbReference type="ChEBI" id="CHEBI:15378"/>
        <dbReference type="ChEBI" id="CHEBI:17957"/>
        <dbReference type="ChEBI" id="CHEBI:30616"/>
        <dbReference type="ChEBI" id="CHEBI:58296"/>
        <dbReference type="ChEBI" id="CHEBI:456216"/>
        <dbReference type="EC" id="2.7.1.50"/>
    </reaction>
</comment>
<comment type="cofactor">
    <cofactor evidence="1">
        <name>Mg(2+)</name>
        <dbReference type="ChEBI" id="CHEBI:18420"/>
    </cofactor>
</comment>
<comment type="pathway">
    <text evidence="1">Cofactor biosynthesis; thiamine diphosphate biosynthesis; 4-methyl-5-(2-phosphoethyl)-thiazole from 5-(2-hydroxyethyl)-4-methylthiazole: step 1/1.</text>
</comment>
<comment type="similarity">
    <text evidence="1">Belongs to the Thz kinase family.</text>
</comment>
<proteinExistence type="inferred from homology"/>
<gene>
    <name evidence="1" type="primary">thiM1</name>
    <name type="ordered locus">SPJ_0657</name>
</gene>
<reference key="1">
    <citation type="journal article" date="2010" name="Genome Biol.">
        <title>Structure and dynamics of the pan-genome of Streptococcus pneumoniae and closely related species.</title>
        <authorList>
            <person name="Donati C."/>
            <person name="Hiller N.L."/>
            <person name="Tettelin H."/>
            <person name="Muzzi A."/>
            <person name="Croucher N.J."/>
            <person name="Angiuoli S.V."/>
            <person name="Oggioni M."/>
            <person name="Dunning Hotopp J.C."/>
            <person name="Hu F.Z."/>
            <person name="Riley D.R."/>
            <person name="Covacci A."/>
            <person name="Mitchell T.J."/>
            <person name="Bentley S.D."/>
            <person name="Kilian M."/>
            <person name="Ehrlich G.D."/>
            <person name="Rappuoli R."/>
            <person name="Moxon E.R."/>
            <person name="Masignani V."/>
        </authorList>
    </citation>
    <scope>NUCLEOTIDE SEQUENCE [LARGE SCALE GENOMIC DNA]</scope>
    <source>
        <strain>JJA</strain>
    </source>
</reference>
<accession>C1CD69</accession>
<organism>
    <name type="scientific">Streptococcus pneumoniae (strain JJA)</name>
    <dbReference type="NCBI Taxonomy" id="488222"/>
    <lineage>
        <taxon>Bacteria</taxon>
        <taxon>Bacillati</taxon>
        <taxon>Bacillota</taxon>
        <taxon>Bacilli</taxon>
        <taxon>Lactobacillales</taxon>
        <taxon>Streptococcaceae</taxon>
        <taxon>Streptococcus</taxon>
    </lineage>
</organism>
<evidence type="ECO:0000255" key="1">
    <source>
        <dbReference type="HAMAP-Rule" id="MF_00228"/>
    </source>
</evidence>
<dbReference type="EC" id="2.7.1.50" evidence="1"/>
<dbReference type="EMBL" id="CP000919">
    <property type="protein sequence ID" value="ACO18806.1"/>
    <property type="molecule type" value="Genomic_DNA"/>
</dbReference>
<dbReference type="RefSeq" id="WP_000202467.1">
    <property type="nucleotide sequence ID" value="NC_012466.1"/>
</dbReference>
<dbReference type="SMR" id="C1CD69"/>
<dbReference type="KEGG" id="sjj:SPJ_0657"/>
<dbReference type="HOGENOM" id="CLU_019943_0_2_9"/>
<dbReference type="UniPathway" id="UPA00060">
    <property type="reaction ID" value="UER00139"/>
</dbReference>
<dbReference type="Proteomes" id="UP000002206">
    <property type="component" value="Chromosome"/>
</dbReference>
<dbReference type="GO" id="GO:0005524">
    <property type="term" value="F:ATP binding"/>
    <property type="evidence" value="ECO:0007669"/>
    <property type="project" value="UniProtKB-UniRule"/>
</dbReference>
<dbReference type="GO" id="GO:0004417">
    <property type="term" value="F:hydroxyethylthiazole kinase activity"/>
    <property type="evidence" value="ECO:0007669"/>
    <property type="project" value="UniProtKB-UniRule"/>
</dbReference>
<dbReference type="GO" id="GO:0000287">
    <property type="term" value="F:magnesium ion binding"/>
    <property type="evidence" value="ECO:0007669"/>
    <property type="project" value="UniProtKB-UniRule"/>
</dbReference>
<dbReference type="GO" id="GO:0009228">
    <property type="term" value="P:thiamine biosynthetic process"/>
    <property type="evidence" value="ECO:0007669"/>
    <property type="project" value="UniProtKB-KW"/>
</dbReference>
<dbReference type="GO" id="GO:0009229">
    <property type="term" value="P:thiamine diphosphate biosynthetic process"/>
    <property type="evidence" value="ECO:0007669"/>
    <property type="project" value="UniProtKB-UniRule"/>
</dbReference>
<dbReference type="CDD" id="cd01170">
    <property type="entry name" value="THZ_kinase"/>
    <property type="match status" value="1"/>
</dbReference>
<dbReference type="Gene3D" id="3.40.1190.20">
    <property type="match status" value="1"/>
</dbReference>
<dbReference type="HAMAP" id="MF_00228">
    <property type="entry name" value="Thz_kinase"/>
    <property type="match status" value="1"/>
</dbReference>
<dbReference type="InterPro" id="IPR000417">
    <property type="entry name" value="Hyethyz_kinase"/>
</dbReference>
<dbReference type="InterPro" id="IPR029056">
    <property type="entry name" value="Ribokinase-like"/>
</dbReference>
<dbReference type="NCBIfam" id="NF006830">
    <property type="entry name" value="PRK09355.1"/>
    <property type="match status" value="1"/>
</dbReference>
<dbReference type="NCBIfam" id="TIGR00694">
    <property type="entry name" value="thiM"/>
    <property type="match status" value="1"/>
</dbReference>
<dbReference type="Pfam" id="PF02110">
    <property type="entry name" value="HK"/>
    <property type="match status" value="1"/>
</dbReference>
<dbReference type="PIRSF" id="PIRSF000513">
    <property type="entry name" value="Thz_kinase"/>
    <property type="match status" value="1"/>
</dbReference>
<dbReference type="PRINTS" id="PR01099">
    <property type="entry name" value="HYETHTZKNASE"/>
</dbReference>
<dbReference type="SUPFAM" id="SSF53613">
    <property type="entry name" value="Ribokinase-like"/>
    <property type="match status" value="1"/>
</dbReference>
<sequence>MTSLKLLKEKAPLVICITNDVVKNFTANGLVALGASPAMSEFPEDLEDLLKYAGGLLINIGTLTDENWKLYQAALKIAEKYNVPAVLDPVACGAGEYRKKVADDLINNYKLAAIRGNAGEIASLVGIDVASKGVDSAGVDNIDEIALAANEKFNIPIVVTGEVDAIAVNGEVVTIHNGSAMMPKVIGTGCLLGAVVASFIGLEKGQELKSLETAMLVYNIAGEMAEKRPNGHLPGTFKVEFINSLYEITDEDVKEFKRVK</sequence>
<protein>
    <recommendedName>
        <fullName evidence="1">Hydroxyethylthiazole kinase 1</fullName>
        <ecNumber evidence="1">2.7.1.50</ecNumber>
    </recommendedName>
    <alternativeName>
        <fullName evidence="1">4-methyl-5-beta-hydroxyethylthiazole kinase 1</fullName>
        <shortName evidence="1">TH kinase 1</shortName>
        <shortName evidence="1">Thz kinase 1</shortName>
    </alternativeName>
</protein>
<feature type="chain" id="PRO_1000198132" description="Hydroxyethylthiazole kinase 1">
    <location>
        <begin position="1"/>
        <end position="260"/>
    </location>
</feature>
<feature type="binding site" evidence="1">
    <location>
        <position position="39"/>
    </location>
    <ligand>
        <name>substrate</name>
    </ligand>
</feature>
<feature type="binding site" evidence="1">
    <location>
        <position position="115"/>
    </location>
    <ligand>
        <name>ATP</name>
        <dbReference type="ChEBI" id="CHEBI:30616"/>
    </ligand>
</feature>
<feature type="binding site" evidence="1">
    <location>
        <position position="160"/>
    </location>
    <ligand>
        <name>ATP</name>
        <dbReference type="ChEBI" id="CHEBI:30616"/>
    </ligand>
</feature>
<feature type="binding site" evidence="1">
    <location>
        <position position="187"/>
    </location>
    <ligand>
        <name>substrate</name>
    </ligand>
</feature>
<name>THIM1_STRZJ</name>
<keyword id="KW-0067">ATP-binding</keyword>
<keyword id="KW-0418">Kinase</keyword>
<keyword id="KW-0460">Magnesium</keyword>
<keyword id="KW-0479">Metal-binding</keyword>
<keyword id="KW-0547">Nucleotide-binding</keyword>
<keyword id="KW-0784">Thiamine biosynthesis</keyword>
<keyword id="KW-0808">Transferase</keyword>